<protein>
    <recommendedName>
        <fullName evidence="1">D-aminoacyl-tRNA deacylase</fullName>
        <shortName evidence="1">DTD</shortName>
        <ecNumber evidence="1">3.1.1.96</ecNumber>
    </recommendedName>
    <alternativeName>
        <fullName evidence="1">Gly-tRNA(Ala) deacylase</fullName>
    </alternativeName>
</protein>
<reference key="1">
    <citation type="submission" date="2007-05" db="EMBL/GenBank/DDBJ databases">
        <title>Complete sequence of Geobacter uraniireducens Rf4.</title>
        <authorList>
            <consortium name="US DOE Joint Genome Institute"/>
            <person name="Copeland A."/>
            <person name="Lucas S."/>
            <person name="Lapidus A."/>
            <person name="Barry K."/>
            <person name="Detter J.C."/>
            <person name="Glavina del Rio T."/>
            <person name="Hammon N."/>
            <person name="Israni S."/>
            <person name="Dalin E."/>
            <person name="Tice H."/>
            <person name="Pitluck S."/>
            <person name="Chertkov O."/>
            <person name="Brettin T."/>
            <person name="Bruce D."/>
            <person name="Han C."/>
            <person name="Schmutz J."/>
            <person name="Larimer F."/>
            <person name="Land M."/>
            <person name="Hauser L."/>
            <person name="Kyrpides N."/>
            <person name="Mikhailova N."/>
            <person name="Shelobolina E."/>
            <person name="Aklujkar M."/>
            <person name="Lovley D."/>
            <person name="Richardson P."/>
        </authorList>
    </citation>
    <scope>NUCLEOTIDE SEQUENCE [LARGE SCALE GENOMIC DNA]</scope>
    <source>
        <strain>ATCC BAA-1134 / JCM 13001 / Rf4</strain>
    </source>
</reference>
<dbReference type="EC" id="3.1.1.96" evidence="1"/>
<dbReference type="EMBL" id="CP000698">
    <property type="protein sequence ID" value="ABQ24822.1"/>
    <property type="molecule type" value="Genomic_DNA"/>
</dbReference>
<dbReference type="RefSeq" id="WP_011937547.1">
    <property type="nucleotide sequence ID" value="NC_009483.1"/>
</dbReference>
<dbReference type="SMR" id="A5GC79"/>
<dbReference type="STRING" id="351605.Gura_0610"/>
<dbReference type="KEGG" id="gur:Gura_0610"/>
<dbReference type="HOGENOM" id="CLU_076901_1_0_7"/>
<dbReference type="OrthoDB" id="9801395at2"/>
<dbReference type="Proteomes" id="UP000006695">
    <property type="component" value="Chromosome"/>
</dbReference>
<dbReference type="GO" id="GO:0005737">
    <property type="term" value="C:cytoplasm"/>
    <property type="evidence" value="ECO:0007669"/>
    <property type="project" value="UniProtKB-SubCell"/>
</dbReference>
<dbReference type="GO" id="GO:0051500">
    <property type="term" value="F:D-tyrosyl-tRNA(Tyr) deacylase activity"/>
    <property type="evidence" value="ECO:0007669"/>
    <property type="project" value="TreeGrafter"/>
</dbReference>
<dbReference type="GO" id="GO:0106026">
    <property type="term" value="F:Gly-tRNA(Ala) deacylase activity"/>
    <property type="evidence" value="ECO:0007669"/>
    <property type="project" value="UniProtKB-UniRule"/>
</dbReference>
<dbReference type="GO" id="GO:0043908">
    <property type="term" value="F:Ser(Gly)-tRNA(Ala) hydrolase activity"/>
    <property type="evidence" value="ECO:0007669"/>
    <property type="project" value="UniProtKB-UniRule"/>
</dbReference>
<dbReference type="GO" id="GO:0000049">
    <property type="term" value="F:tRNA binding"/>
    <property type="evidence" value="ECO:0007669"/>
    <property type="project" value="UniProtKB-UniRule"/>
</dbReference>
<dbReference type="GO" id="GO:0019478">
    <property type="term" value="P:D-amino acid catabolic process"/>
    <property type="evidence" value="ECO:0007669"/>
    <property type="project" value="UniProtKB-UniRule"/>
</dbReference>
<dbReference type="CDD" id="cd00563">
    <property type="entry name" value="Dtyr_deacylase"/>
    <property type="match status" value="1"/>
</dbReference>
<dbReference type="FunFam" id="3.50.80.10:FF:000001">
    <property type="entry name" value="D-aminoacyl-tRNA deacylase"/>
    <property type="match status" value="1"/>
</dbReference>
<dbReference type="Gene3D" id="3.50.80.10">
    <property type="entry name" value="D-tyrosyl-tRNA(Tyr) deacylase"/>
    <property type="match status" value="1"/>
</dbReference>
<dbReference type="HAMAP" id="MF_00518">
    <property type="entry name" value="Deacylase_Dtd"/>
    <property type="match status" value="1"/>
</dbReference>
<dbReference type="InterPro" id="IPR003732">
    <property type="entry name" value="Daa-tRNA_deacyls_DTD"/>
</dbReference>
<dbReference type="InterPro" id="IPR023509">
    <property type="entry name" value="DTD-like_sf"/>
</dbReference>
<dbReference type="NCBIfam" id="TIGR00256">
    <property type="entry name" value="D-aminoacyl-tRNA deacylase"/>
    <property type="match status" value="1"/>
</dbReference>
<dbReference type="PANTHER" id="PTHR10472:SF5">
    <property type="entry name" value="D-AMINOACYL-TRNA DEACYLASE 1"/>
    <property type="match status" value="1"/>
</dbReference>
<dbReference type="PANTHER" id="PTHR10472">
    <property type="entry name" value="D-TYROSYL-TRNA TYR DEACYLASE"/>
    <property type="match status" value="1"/>
</dbReference>
<dbReference type="Pfam" id="PF02580">
    <property type="entry name" value="Tyr_Deacylase"/>
    <property type="match status" value="1"/>
</dbReference>
<dbReference type="SUPFAM" id="SSF69500">
    <property type="entry name" value="DTD-like"/>
    <property type="match status" value="1"/>
</dbReference>
<accession>A5GC79</accession>
<sequence>MKAVIQRVSEAGVKVDGRTVGAVERGILVLLGVEKGDSTKEADWLAEKIVNLRIFEDAAGKMNLSLLDIKGELLAVSQFTLAGNCSKGRRPSFDTAAPPEEAIQLYEYFVGKTWELGIPVQTGIFQADMKVSLVNDGPVTFILETPKNKERGTRS</sequence>
<feature type="chain" id="PRO_1000081654" description="D-aminoacyl-tRNA deacylase">
    <location>
        <begin position="1"/>
        <end position="155"/>
    </location>
</feature>
<feature type="short sequence motif" description="Gly-cisPro motif, important for rejection of L-amino acids" evidence="1">
    <location>
        <begin position="137"/>
        <end position="138"/>
    </location>
</feature>
<organism>
    <name type="scientific">Geotalea uraniireducens (strain Rf4)</name>
    <name type="common">Geobacter uraniireducens</name>
    <dbReference type="NCBI Taxonomy" id="351605"/>
    <lineage>
        <taxon>Bacteria</taxon>
        <taxon>Pseudomonadati</taxon>
        <taxon>Thermodesulfobacteriota</taxon>
        <taxon>Desulfuromonadia</taxon>
        <taxon>Geobacterales</taxon>
        <taxon>Geobacteraceae</taxon>
        <taxon>Geotalea</taxon>
    </lineage>
</organism>
<comment type="function">
    <text evidence="1">An aminoacyl-tRNA editing enzyme that deacylates mischarged D-aminoacyl-tRNAs. Also deacylates mischarged glycyl-tRNA(Ala), protecting cells against glycine mischarging by AlaRS. Acts via tRNA-based rather than protein-based catalysis; rejects L-amino acids rather than detecting D-amino acids in the active site. By recycling D-aminoacyl-tRNA to D-amino acids and free tRNA molecules, this enzyme counteracts the toxicity associated with the formation of D-aminoacyl-tRNA entities in vivo and helps enforce protein L-homochirality.</text>
</comment>
<comment type="catalytic activity">
    <reaction evidence="1">
        <text>glycyl-tRNA(Ala) + H2O = tRNA(Ala) + glycine + H(+)</text>
        <dbReference type="Rhea" id="RHEA:53744"/>
        <dbReference type="Rhea" id="RHEA-COMP:9657"/>
        <dbReference type="Rhea" id="RHEA-COMP:13640"/>
        <dbReference type="ChEBI" id="CHEBI:15377"/>
        <dbReference type="ChEBI" id="CHEBI:15378"/>
        <dbReference type="ChEBI" id="CHEBI:57305"/>
        <dbReference type="ChEBI" id="CHEBI:78442"/>
        <dbReference type="ChEBI" id="CHEBI:78522"/>
        <dbReference type="EC" id="3.1.1.96"/>
    </reaction>
</comment>
<comment type="catalytic activity">
    <reaction evidence="1">
        <text>a D-aminoacyl-tRNA + H2O = a tRNA + a D-alpha-amino acid + H(+)</text>
        <dbReference type="Rhea" id="RHEA:13953"/>
        <dbReference type="Rhea" id="RHEA-COMP:10123"/>
        <dbReference type="Rhea" id="RHEA-COMP:10124"/>
        <dbReference type="ChEBI" id="CHEBI:15377"/>
        <dbReference type="ChEBI" id="CHEBI:15378"/>
        <dbReference type="ChEBI" id="CHEBI:59871"/>
        <dbReference type="ChEBI" id="CHEBI:78442"/>
        <dbReference type="ChEBI" id="CHEBI:79333"/>
        <dbReference type="EC" id="3.1.1.96"/>
    </reaction>
</comment>
<comment type="subunit">
    <text evidence="1">Homodimer.</text>
</comment>
<comment type="subcellular location">
    <subcellularLocation>
        <location evidence="1">Cytoplasm</location>
    </subcellularLocation>
</comment>
<comment type="domain">
    <text evidence="1">A Gly-cisPro motif from one monomer fits into the active site of the other monomer to allow specific chiral rejection of L-amino acids.</text>
</comment>
<comment type="similarity">
    <text evidence="1">Belongs to the DTD family.</text>
</comment>
<gene>
    <name evidence="1" type="primary">dtd</name>
    <name type="ordered locus">Gura_0610</name>
</gene>
<evidence type="ECO:0000255" key="1">
    <source>
        <dbReference type="HAMAP-Rule" id="MF_00518"/>
    </source>
</evidence>
<name>DTD_GEOUR</name>
<keyword id="KW-0963">Cytoplasm</keyword>
<keyword id="KW-0378">Hydrolase</keyword>
<keyword id="KW-1185">Reference proteome</keyword>
<keyword id="KW-0694">RNA-binding</keyword>
<keyword id="KW-0820">tRNA-binding</keyword>
<proteinExistence type="inferred from homology"/>